<name>SECA_DESAH</name>
<proteinExistence type="inferred from homology"/>
<gene>
    <name evidence="1" type="primary">secA</name>
    <name type="ordered locus">HRM2_26650</name>
</gene>
<comment type="function">
    <text evidence="1">Part of the Sec protein translocase complex. Interacts with the SecYEG preprotein conducting channel. Has a central role in coupling the hydrolysis of ATP to the transfer of proteins into and across the cell membrane, serving as an ATP-driven molecular motor driving the stepwise translocation of polypeptide chains across the membrane.</text>
</comment>
<comment type="catalytic activity">
    <reaction evidence="1">
        <text>ATP + H2O + cellular proteinSide 1 = ADP + phosphate + cellular proteinSide 2.</text>
        <dbReference type="EC" id="7.4.2.8"/>
    </reaction>
</comment>
<comment type="cofactor">
    <cofactor evidence="1">
        <name>Zn(2+)</name>
        <dbReference type="ChEBI" id="CHEBI:29105"/>
    </cofactor>
    <text evidence="1">May bind 1 zinc ion per subunit.</text>
</comment>
<comment type="subunit">
    <text evidence="1">Monomer and homodimer. Part of the essential Sec protein translocation apparatus which comprises SecA, SecYEG and auxiliary proteins SecDF-YajC and YidC.</text>
</comment>
<comment type="subcellular location">
    <subcellularLocation>
        <location evidence="1">Cell inner membrane</location>
        <topology evidence="1">Peripheral membrane protein</topology>
        <orientation evidence="1">Cytoplasmic side</orientation>
    </subcellularLocation>
    <subcellularLocation>
        <location evidence="1">Cytoplasm</location>
    </subcellularLocation>
    <text evidence="1">Distribution is 50-50.</text>
</comment>
<comment type="similarity">
    <text evidence="1">Belongs to the SecA family.</text>
</comment>
<reference key="1">
    <citation type="journal article" date="2009" name="Environ. Microbiol.">
        <title>Genome sequence of Desulfobacterium autotrophicum HRM2, a marine sulfate reducer oxidizing organic carbon completely to carbon dioxide.</title>
        <authorList>
            <person name="Strittmatter A.W."/>
            <person name="Liesegang H."/>
            <person name="Rabus R."/>
            <person name="Decker I."/>
            <person name="Amann J."/>
            <person name="Andres S."/>
            <person name="Henne A."/>
            <person name="Fricke W.F."/>
            <person name="Martinez-Arias R."/>
            <person name="Bartels D."/>
            <person name="Goesmann A."/>
            <person name="Krause L."/>
            <person name="Puehler A."/>
            <person name="Klenk H.P."/>
            <person name="Richter M."/>
            <person name="Schuler M."/>
            <person name="Gloeckner F.O."/>
            <person name="Meyerdierks A."/>
            <person name="Gottschalk G."/>
            <person name="Amann R."/>
        </authorList>
    </citation>
    <scope>NUCLEOTIDE SEQUENCE [LARGE SCALE GENOMIC DNA]</scope>
    <source>
        <strain>ATCC 43914 / DSM 3382 / VKM B-1955 / HRM2</strain>
    </source>
</reference>
<organism>
    <name type="scientific">Desulforapulum autotrophicum (strain ATCC 43914 / DSM 3382 / VKM B-1955 / HRM2)</name>
    <name type="common">Desulfobacterium autotrophicum</name>
    <dbReference type="NCBI Taxonomy" id="177437"/>
    <lineage>
        <taxon>Bacteria</taxon>
        <taxon>Pseudomonadati</taxon>
        <taxon>Thermodesulfobacteriota</taxon>
        <taxon>Desulfobacteria</taxon>
        <taxon>Desulfobacterales</taxon>
        <taxon>Desulfobacteraceae</taxon>
        <taxon>Desulforapulum</taxon>
    </lineage>
</organism>
<sequence>MVLNFLTRVFGSSNERAVKRLQPLVDKINALEPRFQKLTDNELAETTASFKLRLANGETLDDLLCEAFALVREASWRTLKMRHFDAQLIGGIALHQGIIAEMKTGEGKTLAATLPAYLNALSGKGVHIVTVNDYLARRDAEWMSTIYNFLNLSVGIIVHDLNDEERKKAYASDITYGTNNEFGFDYLRDNMKFDRESLAQKELNFAIVDEVDSILIDEARTPLIISGPAEKSTTLYAQTDTIISAFKKDIHYNVDEKAKSSTLTEEGVALGEQLLGVENLYDPSNIEILHHLNQAIKAHTLFKRDVDYIVKNDEVVIVDEFTGRLMTGRRYSEGLHQALEAKEGVKIANENQTLASVTFQNFFRMYKKLSGMTGTAETEAAEFKKIYDLDVLVIPTHKPMVRKDFPDLIYKTQKEKYQAAIQEIISLHKKGQPVLVGTIAIDVSEDISDKLKKRGIPHTVLNAKHHKAEAEIVANAGQRGAVTISTNMAGRGTDIVLGEGVKELGGLHILGTSRHESRRIDNQLRGRSGRQGDPGSSRFYLSLEDDLLRIFGGDRITAIMNKLGIDEGEPIEHGLISRAIENAQSKVEGHNFEIRKQLIEYDDVMNQQREVIYRQRRQILTDSDLSTLFKDMIQDQAWQIHAMYKNDKQHPMEWDLEGLKDTVKKQFNLEIDLSPAVCEDIDADALGELIETTAIDAYKAKESLLGPIDTQRLERYIMLQTVDSLWKDHLLNMDHLKEGIGLRGYAQQNPLILYKKEGYEMFEGLVERIKEETLGIFFRIQIAESEPLEPIQKPRQENLVFSHSDDSNVKKPVKRAQEKVGRNDLCPCGSGKKYKKCCGA</sequence>
<keyword id="KW-0067">ATP-binding</keyword>
<keyword id="KW-0997">Cell inner membrane</keyword>
<keyword id="KW-1003">Cell membrane</keyword>
<keyword id="KW-0963">Cytoplasm</keyword>
<keyword id="KW-0472">Membrane</keyword>
<keyword id="KW-0479">Metal-binding</keyword>
<keyword id="KW-0547">Nucleotide-binding</keyword>
<keyword id="KW-0653">Protein transport</keyword>
<keyword id="KW-1185">Reference proteome</keyword>
<keyword id="KW-1278">Translocase</keyword>
<keyword id="KW-0811">Translocation</keyword>
<keyword id="KW-0813">Transport</keyword>
<keyword id="KW-0862">Zinc</keyword>
<feature type="chain" id="PRO_1000215107" description="Protein translocase subunit SecA">
    <location>
        <begin position="1"/>
        <end position="840"/>
    </location>
</feature>
<feature type="region of interest" description="Disordered" evidence="2">
    <location>
        <begin position="518"/>
        <end position="537"/>
    </location>
</feature>
<feature type="binding site" evidence="1">
    <location>
        <position position="87"/>
    </location>
    <ligand>
        <name>ATP</name>
        <dbReference type="ChEBI" id="CHEBI:30616"/>
    </ligand>
</feature>
<feature type="binding site" evidence="1">
    <location>
        <begin position="105"/>
        <end position="109"/>
    </location>
    <ligand>
        <name>ATP</name>
        <dbReference type="ChEBI" id="CHEBI:30616"/>
    </ligand>
</feature>
<feature type="binding site" evidence="1">
    <location>
        <position position="494"/>
    </location>
    <ligand>
        <name>ATP</name>
        <dbReference type="ChEBI" id="CHEBI:30616"/>
    </ligand>
</feature>
<feature type="binding site" evidence="1">
    <location>
        <position position="826"/>
    </location>
    <ligand>
        <name>Zn(2+)</name>
        <dbReference type="ChEBI" id="CHEBI:29105"/>
    </ligand>
</feature>
<feature type="binding site" evidence="1">
    <location>
        <position position="828"/>
    </location>
    <ligand>
        <name>Zn(2+)</name>
        <dbReference type="ChEBI" id="CHEBI:29105"/>
    </ligand>
</feature>
<feature type="binding site" evidence="1">
    <location>
        <position position="837"/>
    </location>
    <ligand>
        <name>Zn(2+)</name>
        <dbReference type="ChEBI" id="CHEBI:29105"/>
    </ligand>
</feature>
<feature type="binding site" evidence="1">
    <location>
        <position position="838"/>
    </location>
    <ligand>
        <name>Zn(2+)</name>
        <dbReference type="ChEBI" id="CHEBI:29105"/>
    </ligand>
</feature>
<dbReference type="EC" id="7.4.2.8" evidence="1"/>
<dbReference type="EMBL" id="CP001087">
    <property type="protein sequence ID" value="ACN15759.1"/>
    <property type="molecule type" value="Genomic_DNA"/>
</dbReference>
<dbReference type="RefSeq" id="WP_015904522.1">
    <property type="nucleotide sequence ID" value="NC_012108.1"/>
</dbReference>
<dbReference type="SMR" id="C0QI23"/>
<dbReference type="STRING" id="177437.HRM2_26650"/>
<dbReference type="KEGG" id="dat:HRM2_26650"/>
<dbReference type="eggNOG" id="COG0653">
    <property type="taxonomic scope" value="Bacteria"/>
</dbReference>
<dbReference type="HOGENOM" id="CLU_005314_3_0_7"/>
<dbReference type="OrthoDB" id="9805579at2"/>
<dbReference type="Proteomes" id="UP000000442">
    <property type="component" value="Chromosome"/>
</dbReference>
<dbReference type="GO" id="GO:0031522">
    <property type="term" value="C:cell envelope Sec protein transport complex"/>
    <property type="evidence" value="ECO:0007669"/>
    <property type="project" value="TreeGrafter"/>
</dbReference>
<dbReference type="GO" id="GO:0005829">
    <property type="term" value="C:cytosol"/>
    <property type="evidence" value="ECO:0007669"/>
    <property type="project" value="TreeGrafter"/>
</dbReference>
<dbReference type="GO" id="GO:0005886">
    <property type="term" value="C:plasma membrane"/>
    <property type="evidence" value="ECO:0007669"/>
    <property type="project" value="UniProtKB-SubCell"/>
</dbReference>
<dbReference type="GO" id="GO:0005524">
    <property type="term" value="F:ATP binding"/>
    <property type="evidence" value="ECO:0007669"/>
    <property type="project" value="UniProtKB-UniRule"/>
</dbReference>
<dbReference type="GO" id="GO:0046872">
    <property type="term" value="F:metal ion binding"/>
    <property type="evidence" value="ECO:0007669"/>
    <property type="project" value="UniProtKB-KW"/>
</dbReference>
<dbReference type="GO" id="GO:0008564">
    <property type="term" value="F:protein-exporting ATPase activity"/>
    <property type="evidence" value="ECO:0007669"/>
    <property type="project" value="UniProtKB-EC"/>
</dbReference>
<dbReference type="GO" id="GO:0065002">
    <property type="term" value="P:intracellular protein transmembrane transport"/>
    <property type="evidence" value="ECO:0007669"/>
    <property type="project" value="UniProtKB-UniRule"/>
</dbReference>
<dbReference type="GO" id="GO:0017038">
    <property type="term" value="P:protein import"/>
    <property type="evidence" value="ECO:0007669"/>
    <property type="project" value="InterPro"/>
</dbReference>
<dbReference type="GO" id="GO:0006605">
    <property type="term" value="P:protein targeting"/>
    <property type="evidence" value="ECO:0007669"/>
    <property type="project" value="UniProtKB-UniRule"/>
</dbReference>
<dbReference type="GO" id="GO:0043952">
    <property type="term" value="P:protein transport by the Sec complex"/>
    <property type="evidence" value="ECO:0007669"/>
    <property type="project" value="TreeGrafter"/>
</dbReference>
<dbReference type="CDD" id="cd17928">
    <property type="entry name" value="DEXDc_SecA"/>
    <property type="match status" value="1"/>
</dbReference>
<dbReference type="CDD" id="cd18803">
    <property type="entry name" value="SF2_C_secA"/>
    <property type="match status" value="1"/>
</dbReference>
<dbReference type="FunFam" id="3.40.50.300:FF:000429">
    <property type="entry name" value="Preprotein translocase subunit SecA"/>
    <property type="match status" value="1"/>
</dbReference>
<dbReference type="FunFam" id="3.90.1440.10:FF:000001">
    <property type="entry name" value="Preprotein translocase subunit SecA"/>
    <property type="match status" value="1"/>
</dbReference>
<dbReference type="FunFam" id="1.10.3060.10:FF:000003">
    <property type="entry name" value="Protein translocase subunit SecA"/>
    <property type="match status" value="1"/>
</dbReference>
<dbReference type="FunFam" id="3.40.50.300:FF:000334">
    <property type="entry name" value="Protein translocase subunit SecA"/>
    <property type="match status" value="1"/>
</dbReference>
<dbReference type="Gene3D" id="1.10.3060.10">
    <property type="entry name" value="Helical scaffold and wing domains of SecA"/>
    <property type="match status" value="1"/>
</dbReference>
<dbReference type="Gene3D" id="3.40.50.300">
    <property type="entry name" value="P-loop containing nucleotide triphosphate hydrolases"/>
    <property type="match status" value="3"/>
</dbReference>
<dbReference type="Gene3D" id="3.90.1440.10">
    <property type="entry name" value="SecA, preprotein cross-linking domain"/>
    <property type="match status" value="1"/>
</dbReference>
<dbReference type="HAMAP" id="MF_01382">
    <property type="entry name" value="SecA"/>
    <property type="match status" value="1"/>
</dbReference>
<dbReference type="InterPro" id="IPR014001">
    <property type="entry name" value="Helicase_ATP-bd"/>
</dbReference>
<dbReference type="InterPro" id="IPR001650">
    <property type="entry name" value="Helicase_C-like"/>
</dbReference>
<dbReference type="InterPro" id="IPR027417">
    <property type="entry name" value="P-loop_NTPase"/>
</dbReference>
<dbReference type="InterPro" id="IPR004027">
    <property type="entry name" value="SEC_C_motif"/>
</dbReference>
<dbReference type="InterPro" id="IPR000185">
    <property type="entry name" value="SecA"/>
</dbReference>
<dbReference type="InterPro" id="IPR020937">
    <property type="entry name" value="SecA_CS"/>
</dbReference>
<dbReference type="InterPro" id="IPR011115">
    <property type="entry name" value="SecA_DEAD"/>
</dbReference>
<dbReference type="InterPro" id="IPR014018">
    <property type="entry name" value="SecA_motor_DEAD"/>
</dbReference>
<dbReference type="InterPro" id="IPR011130">
    <property type="entry name" value="SecA_preprotein_X-link_dom"/>
</dbReference>
<dbReference type="InterPro" id="IPR044722">
    <property type="entry name" value="SecA_SF2_C"/>
</dbReference>
<dbReference type="InterPro" id="IPR011116">
    <property type="entry name" value="SecA_Wing/Scaffold"/>
</dbReference>
<dbReference type="InterPro" id="IPR036266">
    <property type="entry name" value="SecA_Wing/Scaffold_sf"/>
</dbReference>
<dbReference type="InterPro" id="IPR036670">
    <property type="entry name" value="SecA_X-link_sf"/>
</dbReference>
<dbReference type="NCBIfam" id="NF006630">
    <property type="entry name" value="PRK09200.1"/>
    <property type="match status" value="1"/>
</dbReference>
<dbReference type="NCBIfam" id="NF009538">
    <property type="entry name" value="PRK12904.1"/>
    <property type="match status" value="1"/>
</dbReference>
<dbReference type="NCBIfam" id="TIGR00963">
    <property type="entry name" value="secA"/>
    <property type="match status" value="1"/>
</dbReference>
<dbReference type="PANTHER" id="PTHR30612:SF0">
    <property type="entry name" value="CHLOROPLAST PROTEIN-TRANSPORTING ATPASE"/>
    <property type="match status" value="1"/>
</dbReference>
<dbReference type="PANTHER" id="PTHR30612">
    <property type="entry name" value="SECA INNER MEMBRANE COMPONENT OF SEC PROTEIN SECRETION SYSTEM"/>
    <property type="match status" value="1"/>
</dbReference>
<dbReference type="Pfam" id="PF21090">
    <property type="entry name" value="P-loop_SecA"/>
    <property type="match status" value="1"/>
</dbReference>
<dbReference type="Pfam" id="PF02810">
    <property type="entry name" value="SEC-C"/>
    <property type="match status" value="1"/>
</dbReference>
<dbReference type="Pfam" id="PF07517">
    <property type="entry name" value="SecA_DEAD"/>
    <property type="match status" value="1"/>
</dbReference>
<dbReference type="Pfam" id="PF01043">
    <property type="entry name" value="SecA_PP_bind"/>
    <property type="match status" value="1"/>
</dbReference>
<dbReference type="Pfam" id="PF07516">
    <property type="entry name" value="SecA_SW"/>
    <property type="match status" value="1"/>
</dbReference>
<dbReference type="PRINTS" id="PR00906">
    <property type="entry name" value="SECA"/>
</dbReference>
<dbReference type="SMART" id="SM00957">
    <property type="entry name" value="SecA_DEAD"/>
    <property type="match status" value="1"/>
</dbReference>
<dbReference type="SMART" id="SM00958">
    <property type="entry name" value="SecA_PP_bind"/>
    <property type="match status" value="1"/>
</dbReference>
<dbReference type="SUPFAM" id="SSF81886">
    <property type="entry name" value="Helical scaffold and wing domains of SecA"/>
    <property type="match status" value="1"/>
</dbReference>
<dbReference type="SUPFAM" id="SSF52540">
    <property type="entry name" value="P-loop containing nucleoside triphosphate hydrolases"/>
    <property type="match status" value="2"/>
</dbReference>
<dbReference type="SUPFAM" id="SSF81767">
    <property type="entry name" value="Pre-protein crosslinking domain of SecA"/>
    <property type="match status" value="1"/>
</dbReference>
<dbReference type="PROSITE" id="PS01312">
    <property type="entry name" value="SECA"/>
    <property type="match status" value="1"/>
</dbReference>
<dbReference type="PROSITE" id="PS51196">
    <property type="entry name" value="SECA_MOTOR_DEAD"/>
    <property type="match status" value="1"/>
</dbReference>
<evidence type="ECO:0000255" key="1">
    <source>
        <dbReference type="HAMAP-Rule" id="MF_01382"/>
    </source>
</evidence>
<evidence type="ECO:0000256" key="2">
    <source>
        <dbReference type="SAM" id="MobiDB-lite"/>
    </source>
</evidence>
<protein>
    <recommendedName>
        <fullName evidence="1">Protein translocase subunit SecA</fullName>
        <ecNumber evidence="1">7.4.2.8</ecNumber>
    </recommendedName>
</protein>
<accession>C0QI23</accession>